<accession>P62564</accession>
<accession>P56245</accession>
<accession>P81253</accession>
<evidence type="ECO:0000250" key="1"/>
<evidence type="ECO:0000269" key="2">
    <source>
    </source>
</evidence>
<proteinExistence type="evidence at protein level"/>
<name>CDN11_RANXA</name>
<feature type="peptide" id="PRO_0000043758" description="Caeridin-1.1/1.2/1.3">
    <location>
        <begin position="1"/>
        <end position="12"/>
    </location>
</feature>
<feature type="modified residue" description="Leucine amide" evidence="2">
    <location>
        <position position="12"/>
    </location>
</feature>
<protein>
    <recommendedName>
        <fullName>Caeridin-1.1/1.2/1.3</fullName>
    </recommendedName>
</protein>
<reference key="1">
    <citation type="journal article" date="1997" name="J. Pept. Sci.">
        <title>New caerin antibacterial peptides from the skin glands of the Australian tree frog Litoria xanthomera.</title>
        <authorList>
            <person name="Steinborner S.T."/>
            <person name="Waugh R.J."/>
            <person name="Bowie J.H."/>
            <person name="Wallace J.C."/>
            <person name="Tyler M.J."/>
            <person name="Ramsay S.L."/>
        </authorList>
    </citation>
    <scope>PROTEIN SEQUENCE</scope>
    <scope>AMIDATION AT LEU-12</scope>
    <scope>MASS SPECTROMETRY</scope>
</reference>
<dbReference type="GO" id="GO:0005576">
    <property type="term" value="C:extracellular region"/>
    <property type="evidence" value="ECO:0007669"/>
    <property type="project" value="UniProtKB-SubCell"/>
</dbReference>
<dbReference type="GO" id="GO:0006952">
    <property type="term" value="P:defense response"/>
    <property type="evidence" value="ECO:0007669"/>
    <property type="project" value="UniProtKB-KW"/>
</dbReference>
<sequence length="12" mass="1141">GLLDGLLGTLGL</sequence>
<comment type="function">
    <text>Caeridins show neither neuropeptide activity nor antibiotic activity.</text>
</comment>
<comment type="subcellular location">
    <subcellularLocation>
        <location>Secreted</location>
    </subcellularLocation>
</comment>
<comment type="tissue specificity">
    <text>Expressed by the skin dorsal glands.</text>
</comment>
<comment type="PTM">
    <text evidence="1">Isomerization alpha-beta of the Asp-4 residue in caeridin 1.2; a cyclic succinimide may be formed between Asp-4 and Gly-5 residues in caeridin 1.3.</text>
</comment>
<comment type="mass spectrometry" mass="1140.0" method="FAB" evidence="2"/>
<organism>
    <name type="scientific">Ranoidea xanthomera</name>
    <name type="common">Northern orange-eyed tree frog</name>
    <name type="synonym">Litoria xanthomera</name>
    <dbReference type="NCBI Taxonomy" id="79697"/>
    <lineage>
        <taxon>Eukaryota</taxon>
        <taxon>Metazoa</taxon>
        <taxon>Chordata</taxon>
        <taxon>Craniata</taxon>
        <taxon>Vertebrata</taxon>
        <taxon>Euteleostomi</taxon>
        <taxon>Amphibia</taxon>
        <taxon>Batrachia</taxon>
        <taxon>Anura</taxon>
        <taxon>Neobatrachia</taxon>
        <taxon>Hyloidea</taxon>
        <taxon>Hylidae</taxon>
        <taxon>Pelodryadinae</taxon>
        <taxon>Litoria</taxon>
    </lineage>
</organism>
<keyword id="KW-0027">Amidation</keyword>
<keyword id="KW-0878">Amphibian defense peptide</keyword>
<keyword id="KW-0903">Direct protein sequencing</keyword>
<keyword id="KW-0964">Secreted</keyword>